<sequence length="48" mass="5687">MARREFGKGARRCRRCGDTHGVIQKYGIMLCRQCFREVAEKMGFKKYN</sequence>
<comment type="function">
    <text evidence="1">Binds 16S rRNA, required for the assembly of 30S particles.</text>
</comment>
<comment type="cofactor">
    <cofactor evidence="1">
        <name>Zn(2+)</name>
        <dbReference type="ChEBI" id="CHEBI:29105"/>
    </cofactor>
    <text evidence="1">Binds 1 zinc ion per subunit.</text>
</comment>
<comment type="subunit">
    <text evidence="1">Part of the 30S ribosomal subunit.</text>
</comment>
<comment type="similarity">
    <text evidence="1">Belongs to the universal ribosomal protein uS14 family. Zinc-binding uS14 subfamily.</text>
</comment>
<protein>
    <recommendedName>
        <fullName evidence="1">Small ribosomal subunit protein uS14</fullName>
    </recommendedName>
    <alternativeName>
        <fullName evidence="2">30S ribosomal protein S14 type Z</fullName>
    </alternativeName>
</protein>
<gene>
    <name evidence="1" type="primary">rps14</name>
    <name evidence="1" type="synonym">rpsN</name>
    <name type="ordered locus">MK1222</name>
</gene>
<feature type="chain" id="PRO_0000269161" description="Small ribosomal subunit protein uS14">
    <location>
        <begin position="1"/>
        <end position="48"/>
    </location>
</feature>
<feature type="binding site" evidence="1">
    <location>
        <position position="13"/>
    </location>
    <ligand>
        <name>Zn(2+)</name>
        <dbReference type="ChEBI" id="CHEBI:29105"/>
    </ligand>
</feature>
<feature type="binding site" evidence="1">
    <location>
        <position position="16"/>
    </location>
    <ligand>
        <name>Zn(2+)</name>
        <dbReference type="ChEBI" id="CHEBI:29105"/>
    </ligand>
</feature>
<feature type="binding site" evidence="1">
    <location>
        <position position="31"/>
    </location>
    <ligand>
        <name>Zn(2+)</name>
        <dbReference type="ChEBI" id="CHEBI:29105"/>
    </ligand>
</feature>
<feature type="binding site" evidence="1">
    <location>
        <position position="34"/>
    </location>
    <ligand>
        <name>Zn(2+)</name>
        <dbReference type="ChEBI" id="CHEBI:29105"/>
    </ligand>
</feature>
<organism>
    <name type="scientific">Methanopyrus kandleri (strain AV19 / DSM 6324 / JCM 9639 / NBRC 100938)</name>
    <dbReference type="NCBI Taxonomy" id="190192"/>
    <lineage>
        <taxon>Archaea</taxon>
        <taxon>Methanobacteriati</taxon>
        <taxon>Methanobacteriota</taxon>
        <taxon>Methanomada group</taxon>
        <taxon>Methanopyri</taxon>
        <taxon>Methanopyrales</taxon>
        <taxon>Methanopyraceae</taxon>
        <taxon>Methanopyrus</taxon>
    </lineage>
</organism>
<name>RS14Z_METKA</name>
<evidence type="ECO:0000255" key="1">
    <source>
        <dbReference type="HAMAP-Rule" id="MF_01364"/>
    </source>
</evidence>
<evidence type="ECO:0000305" key="2"/>
<proteinExistence type="inferred from homology"/>
<accession>Q8TW16</accession>
<dbReference type="EMBL" id="AE009439">
    <property type="protein sequence ID" value="AAM02435.1"/>
    <property type="molecule type" value="Genomic_DNA"/>
</dbReference>
<dbReference type="SMR" id="Q8TW16"/>
<dbReference type="FunCoup" id="Q8TW16">
    <property type="interactions" value="125"/>
</dbReference>
<dbReference type="STRING" id="190192.MK1222"/>
<dbReference type="PaxDb" id="190192-MK1222"/>
<dbReference type="EnsemblBacteria" id="AAM02435">
    <property type="protein sequence ID" value="AAM02435"/>
    <property type="gene ID" value="MK1222"/>
</dbReference>
<dbReference type="KEGG" id="mka:MK1222"/>
<dbReference type="PATRIC" id="fig|190192.8.peg.1325"/>
<dbReference type="HOGENOM" id="CLU_177289_2_2_2"/>
<dbReference type="InParanoid" id="Q8TW16"/>
<dbReference type="OrthoDB" id="5615at2157"/>
<dbReference type="Proteomes" id="UP000001826">
    <property type="component" value="Chromosome"/>
</dbReference>
<dbReference type="GO" id="GO:0022627">
    <property type="term" value="C:cytosolic small ribosomal subunit"/>
    <property type="evidence" value="ECO:0007669"/>
    <property type="project" value="TreeGrafter"/>
</dbReference>
<dbReference type="GO" id="GO:0019843">
    <property type="term" value="F:rRNA binding"/>
    <property type="evidence" value="ECO:0007669"/>
    <property type="project" value="UniProtKB-UniRule"/>
</dbReference>
<dbReference type="GO" id="GO:0003735">
    <property type="term" value="F:structural constituent of ribosome"/>
    <property type="evidence" value="ECO:0007669"/>
    <property type="project" value="InterPro"/>
</dbReference>
<dbReference type="GO" id="GO:0008270">
    <property type="term" value="F:zinc ion binding"/>
    <property type="evidence" value="ECO:0007669"/>
    <property type="project" value="UniProtKB-UniRule"/>
</dbReference>
<dbReference type="GO" id="GO:0002181">
    <property type="term" value="P:cytoplasmic translation"/>
    <property type="evidence" value="ECO:0007669"/>
    <property type="project" value="TreeGrafter"/>
</dbReference>
<dbReference type="FunFam" id="4.10.830.10:FF:000002">
    <property type="entry name" value="40S ribosomal protein S29"/>
    <property type="match status" value="1"/>
</dbReference>
<dbReference type="Gene3D" id="4.10.830.10">
    <property type="entry name" value="30s Ribosomal Protein S14, Chain N"/>
    <property type="match status" value="1"/>
</dbReference>
<dbReference type="HAMAP" id="MF_01364_A">
    <property type="entry name" value="Ribosomal_uS14_2_A"/>
    <property type="match status" value="1"/>
</dbReference>
<dbReference type="InterPro" id="IPR001209">
    <property type="entry name" value="Ribosomal_uS14"/>
</dbReference>
<dbReference type="InterPro" id="IPR023676">
    <property type="entry name" value="Ribosomal_uS14_arc"/>
</dbReference>
<dbReference type="InterPro" id="IPR018271">
    <property type="entry name" value="Ribosomal_uS14_CS"/>
</dbReference>
<dbReference type="InterPro" id="IPR039744">
    <property type="entry name" value="RIbosomal_uS14_euk_arc"/>
</dbReference>
<dbReference type="InterPro" id="IPR043140">
    <property type="entry name" value="Ribosomal_uS14_sf"/>
</dbReference>
<dbReference type="NCBIfam" id="NF004424">
    <property type="entry name" value="PRK05766.1"/>
    <property type="match status" value="1"/>
</dbReference>
<dbReference type="PANTHER" id="PTHR12010">
    <property type="entry name" value="40S RIBOSOMAL PROTEIN S29"/>
    <property type="match status" value="1"/>
</dbReference>
<dbReference type="PANTHER" id="PTHR12010:SF2">
    <property type="entry name" value="40S RIBOSOMAL PROTEIN S29"/>
    <property type="match status" value="1"/>
</dbReference>
<dbReference type="Pfam" id="PF00253">
    <property type="entry name" value="Ribosomal_S14"/>
    <property type="match status" value="1"/>
</dbReference>
<dbReference type="SUPFAM" id="SSF57716">
    <property type="entry name" value="Glucocorticoid receptor-like (DNA-binding domain)"/>
    <property type="match status" value="1"/>
</dbReference>
<dbReference type="PROSITE" id="PS00527">
    <property type="entry name" value="RIBOSOMAL_S14"/>
    <property type="match status" value="1"/>
</dbReference>
<keyword id="KW-0479">Metal-binding</keyword>
<keyword id="KW-1185">Reference proteome</keyword>
<keyword id="KW-0687">Ribonucleoprotein</keyword>
<keyword id="KW-0689">Ribosomal protein</keyword>
<keyword id="KW-0694">RNA-binding</keyword>
<keyword id="KW-0699">rRNA-binding</keyword>
<keyword id="KW-0862">Zinc</keyword>
<reference key="1">
    <citation type="journal article" date="2002" name="Proc. Natl. Acad. Sci. U.S.A.">
        <title>The complete genome of hyperthermophile Methanopyrus kandleri AV19 and monophyly of archaeal methanogens.</title>
        <authorList>
            <person name="Slesarev A.I."/>
            <person name="Mezhevaya K.V."/>
            <person name="Makarova K.S."/>
            <person name="Polushin N.N."/>
            <person name="Shcherbinina O.V."/>
            <person name="Shakhova V.V."/>
            <person name="Belova G.I."/>
            <person name="Aravind L."/>
            <person name="Natale D.A."/>
            <person name="Rogozin I.B."/>
            <person name="Tatusov R.L."/>
            <person name="Wolf Y.I."/>
            <person name="Stetter K.O."/>
            <person name="Malykh A.G."/>
            <person name="Koonin E.V."/>
            <person name="Kozyavkin S.A."/>
        </authorList>
    </citation>
    <scope>NUCLEOTIDE SEQUENCE [LARGE SCALE GENOMIC DNA]</scope>
    <source>
        <strain>AV19 / DSM 6324 / JCM 9639 / NBRC 100938</strain>
    </source>
</reference>